<feature type="chain" id="PRO_0000146297" description="Small ribosomal subunit protein uS12">
    <location>
        <begin position="1"/>
        <end position="123"/>
    </location>
</feature>
<feature type="modified residue" description="3-methylthioaspartic acid" evidence="2">
    <location>
        <position position="89"/>
    </location>
</feature>
<accession>Q6N4T2</accession>
<proteinExistence type="evidence at protein level"/>
<sequence>MPTINQLIANPRVVQKSRKKVPALQQSPQKRGVCTRVYTTTPKKPNSALRKVAKVRLTNGFEVIGYIPGEGHNLQEHSVVMIRGGRVKDLPGVRYHILRGVLDTQGVKNRKQRRSKYGAKRPK</sequence>
<evidence type="ECO:0000255" key="1">
    <source>
        <dbReference type="HAMAP-Rule" id="MF_00403"/>
    </source>
</evidence>
<evidence type="ECO:0000269" key="2">
    <source>
    </source>
</evidence>
<evidence type="ECO:0000305" key="3"/>
<gene>
    <name evidence="1" type="primary">rpsL</name>
    <name type="ordered locus">RPA3255</name>
</gene>
<name>RS12_RHOPA</name>
<reference key="1">
    <citation type="journal article" date="2004" name="Nat. Biotechnol.">
        <title>Complete genome sequence of the metabolically versatile photosynthetic bacterium Rhodopseudomonas palustris.</title>
        <authorList>
            <person name="Larimer F.W."/>
            <person name="Chain P."/>
            <person name="Hauser L."/>
            <person name="Lamerdin J.E."/>
            <person name="Malfatti S."/>
            <person name="Do L."/>
            <person name="Land M.L."/>
            <person name="Pelletier D.A."/>
            <person name="Beatty J.T."/>
            <person name="Lang A.S."/>
            <person name="Tabita F.R."/>
            <person name="Gibson J.L."/>
            <person name="Hanson T.E."/>
            <person name="Bobst C."/>
            <person name="Torres y Torres J.L."/>
            <person name="Peres C."/>
            <person name="Harrison F.H."/>
            <person name="Gibson J."/>
            <person name="Harwood C.S."/>
        </authorList>
    </citation>
    <scope>NUCLEOTIDE SEQUENCE [LARGE SCALE GENOMIC DNA]</scope>
    <source>
        <strain>ATCC BAA-98 / CGA009</strain>
    </source>
</reference>
<reference key="2">
    <citation type="journal article" date="2004" name="J. Proteome Res.">
        <title>Characterization of the 70S ribosome from Rhodopseudomonas palustris using an integrated 'top-down' and 'bottom-up' mass spectrometric approach.</title>
        <authorList>
            <person name="Strader M.B."/>
            <person name="VerBerkmoes N.C."/>
            <person name="Tabb D.L."/>
            <person name="Connelly H.M."/>
            <person name="Barton J.W."/>
            <person name="Bruce B.D."/>
            <person name="Pelletier D.A."/>
            <person name="Davison B.H."/>
            <person name="Hettich R.L."/>
            <person name="Larimer F.W."/>
            <person name="Hurst G.B."/>
        </authorList>
    </citation>
    <scope>METHYLTHIOLATION AT ASP-89</scope>
    <scope>MASS SPECTROMETRY</scope>
    <source>
        <strain>ATCC BAA-98 / CGA009</strain>
    </source>
</reference>
<protein>
    <recommendedName>
        <fullName evidence="1">Small ribosomal subunit protein uS12</fullName>
    </recommendedName>
    <alternativeName>
        <fullName evidence="3">30S ribosomal protein S12</fullName>
    </alternativeName>
    <alternativeName>
        <fullName>RRP-S12</fullName>
    </alternativeName>
</protein>
<keyword id="KW-0488">Methylation</keyword>
<keyword id="KW-0687">Ribonucleoprotein</keyword>
<keyword id="KW-0689">Ribosomal protein</keyword>
<keyword id="KW-0694">RNA-binding</keyword>
<keyword id="KW-0699">rRNA-binding</keyword>
<keyword id="KW-0820">tRNA-binding</keyword>
<comment type="function">
    <text evidence="1">With S4 and S5 plays an important role in translational accuracy.</text>
</comment>
<comment type="function">
    <text evidence="1">Interacts with and stabilizes bases of the 16S rRNA that are involved in tRNA selection in the A site and with the mRNA backbone. Located at the interface of the 30S and 50S subunits, it traverses the body of the 30S subunit contacting proteins on the other side and probably holding the rRNA structure together. The combined cluster of proteins S8, S12 and S17 appears to hold together the shoulder and platform of the 30S subunit.</text>
</comment>
<comment type="subunit">
    <text evidence="1">Part of the 30S ribosomal subunit. Contacts proteins S8 and S17. May interact with IF1 in the 30S initiation complex.</text>
</comment>
<comment type="PTM">
    <text>Both N-terminus methionine truncation and retention have been observed for this protein.</text>
</comment>
<comment type="mass spectrometry">
    <text>This is the mass for the protein without N-terminus methionine removal.</text>
</comment>
<comment type="similarity">
    <text evidence="1">Belongs to the universal ribosomal protein uS12 family.</text>
</comment>
<comment type="caution">
    <text evidence="3">Both N-terminus methionine truncation and retention have been observed for this protein by 2 different experiments.</text>
</comment>
<dbReference type="EMBL" id="BX572603">
    <property type="protein sequence ID" value="CAE28696.1"/>
    <property type="molecule type" value="Genomic_DNA"/>
</dbReference>
<dbReference type="RefSeq" id="WP_008969396.1">
    <property type="nucleotide sequence ID" value="NZ_CP116810.1"/>
</dbReference>
<dbReference type="SMR" id="Q6N4T2"/>
<dbReference type="IntAct" id="Q6N4T2">
    <property type="interactions" value="1"/>
</dbReference>
<dbReference type="STRING" id="258594.RPA3255"/>
<dbReference type="GeneID" id="66894341"/>
<dbReference type="eggNOG" id="COG0048">
    <property type="taxonomic scope" value="Bacteria"/>
</dbReference>
<dbReference type="HOGENOM" id="CLU_104295_1_2_5"/>
<dbReference type="PhylomeDB" id="Q6N4T2"/>
<dbReference type="GO" id="GO:0015935">
    <property type="term" value="C:small ribosomal subunit"/>
    <property type="evidence" value="ECO:0007669"/>
    <property type="project" value="InterPro"/>
</dbReference>
<dbReference type="GO" id="GO:0019843">
    <property type="term" value="F:rRNA binding"/>
    <property type="evidence" value="ECO:0007669"/>
    <property type="project" value="UniProtKB-UniRule"/>
</dbReference>
<dbReference type="GO" id="GO:0003735">
    <property type="term" value="F:structural constituent of ribosome"/>
    <property type="evidence" value="ECO:0007669"/>
    <property type="project" value="InterPro"/>
</dbReference>
<dbReference type="GO" id="GO:0000049">
    <property type="term" value="F:tRNA binding"/>
    <property type="evidence" value="ECO:0007669"/>
    <property type="project" value="UniProtKB-UniRule"/>
</dbReference>
<dbReference type="GO" id="GO:0006412">
    <property type="term" value="P:translation"/>
    <property type="evidence" value="ECO:0007669"/>
    <property type="project" value="UniProtKB-UniRule"/>
</dbReference>
<dbReference type="CDD" id="cd03368">
    <property type="entry name" value="Ribosomal_S12"/>
    <property type="match status" value="1"/>
</dbReference>
<dbReference type="FunFam" id="2.40.50.140:FF:000001">
    <property type="entry name" value="30S ribosomal protein S12"/>
    <property type="match status" value="1"/>
</dbReference>
<dbReference type="Gene3D" id="2.40.50.140">
    <property type="entry name" value="Nucleic acid-binding proteins"/>
    <property type="match status" value="1"/>
</dbReference>
<dbReference type="HAMAP" id="MF_00403_B">
    <property type="entry name" value="Ribosomal_uS12_B"/>
    <property type="match status" value="1"/>
</dbReference>
<dbReference type="InterPro" id="IPR012340">
    <property type="entry name" value="NA-bd_OB-fold"/>
</dbReference>
<dbReference type="InterPro" id="IPR006032">
    <property type="entry name" value="Ribosomal_uS12"/>
</dbReference>
<dbReference type="InterPro" id="IPR005679">
    <property type="entry name" value="Ribosomal_uS12_bac"/>
</dbReference>
<dbReference type="NCBIfam" id="TIGR00981">
    <property type="entry name" value="rpsL_bact"/>
    <property type="match status" value="1"/>
</dbReference>
<dbReference type="PANTHER" id="PTHR11652">
    <property type="entry name" value="30S RIBOSOMAL PROTEIN S12 FAMILY MEMBER"/>
    <property type="match status" value="1"/>
</dbReference>
<dbReference type="Pfam" id="PF00164">
    <property type="entry name" value="Ribosom_S12_S23"/>
    <property type="match status" value="1"/>
</dbReference>
<dbReference type="PIRSF" id="PIRSF002133">
    <property type="entry name" value="Ribosomal_S12/S23"/>
    <property type="match status" value="1"/>
</dbReference>
<dbReference type="PRINTS" id="PR01034">
    <property type="entry name" value="RIBOSOMALS12"/>
</dbReference>
<dbReference type="SUPFAM" id="SSF50249">
    <property type="entry name" value="Nucleic acid-binding proteins"/>
    <property type="match status" value="1"/>
</dbReference>
<dbReference type="PROSITE" id="PS00055">
    <property type="entry name" value="RIBOSOMAL_S12"/>
    <property type="match status" value="1"/>
</dbReference>
<organism>
    <name type="scientific">Rhodopseudomonas palustris (strain ATCC BAA-98 / CGA009)</name>
    <dbReference type="NCBI Taxonomy" id="258594"/>
    <lineage>
        <taxon>Bacteria</taxon>
        <taxon>Pseudomonadati</taxon>
        <taxon>Pseudomonadota</taxon>
        <taxon>Alphaproteobacteria</taxon>
        <taxon>Hyphomicrobiales</taxon>
        <taxon>Nitrobacteraceae</taxon>
        <taxon>Rhodopseudomonas</taxon>
    </lineage>
</organism>